<evidence type="ECO:0000255" key="1">
    <source>
        <dbReference type="HAMAP-Rule" id="MF_01561"/>
    </source>
</evidence>
<organism>
    <name type="scientific">Aliivibrio fischeri (strain ATCC 700601 / ES114)</name>
    <name type="common">Vibrio fischeri</name>
    <dbReference type="NCBI Taxonomy" id="312309"/>
    <lineage>
        <taxon>Bacteria</taxon>
        <taxon>Pseudomonadati</taxon>
        <taxon>Pseudomonadota</taxon>
        <taxon>Gammaproteobacteria</taxon>
        <taxon>Vibrionales</taxon>
        <taxon>Vibrionaceae</taxon>
        <taxon>Aliivibrio</taxon>
    </lineage>
</organism>
<sequence>MNVVVDTHTHTLASGHAYSTIIENARSAQNKGLKLLCTTDHAPEMPGAPHYWYFNNQRILPRFLHQVGILRGVEANILNVKGEIDLPSSSDQHLDWVIASFHEPVFAPASEAEHTAALLNVIKSGRIDVLGHSGNPNYPFDIERVLQCAKEHNVAIEVNNTSLTGKSRKGSDVRCDKIVEIGKEVGVYFTTGSDAHFCEEIARLELAIALLEKYEISEDKIITTSTSRFLNFLLLRGKPIIPEFDSLY</sequence>
<keyword id="KW-0378">Hydrolase</keyword>
<keyword id="KW-0479">Metal-binding</keyword>
<keyword id="KW-1185">Reference proteome</keyword>
<keyword id="KW-0862">Zinc</keyword>
<comment type="cofactor">
    <cofactor evidence="1">
        <name>Zn(2+)</name>
        <dbReference type="ChEBI" id="CHEBI:29105"/>
    </cofactor>
    <text evidence="1">Binds 3 Zn(2+) ions per subunit.</text>
</comment>
<comment type="similarity">
    <text evidence="1">Belongs to the PHP family.</text>
</comment>
<dbReference type="EC" id="3.1.3.-" evidence="1"/>
<dbReference type="EMBL" id="CP000021">
    <property type="protein sequence ID" value="AAW87135.1"/>
    <property type="molecule type" value="Genomic_DNA"/>
</dbReference>
<dbReference type="RefSeq" id="WP_011262968.1">
    <property type="nucleotide sequence ID" value="NC_006841.2"/>
</dbReference>
<dbReference type="RefSeq" id="YP_206024.1">
    <property type="nucleotide sequence ID" value="NC_006841.2"/>
</dbReference>
<dbReference type="SMR" id="Q5E1G0"/>
<dbReference type="STRING" id="312309.VF_A0065"/>
<dbReference type="EnsemblBacteria" id="AAW87135">
    <property type="protein sequence ID" value="AAW87135"/>
    <property type="gene ID" value="VF_A0065"/>
</dbReference>
<dbReference type="GeneID" id="54165391"/>
<dbReference type="KEGG" id="vfi:VF_A0065"/>
<dbReference type="PATRIC" id="fig|312309.11.peg.2669"/>
<dbReference type="eggNOG" id="COG1387">
    <property type="taxonomic scope" value="Bacteria"/>
</dbReference>
<dbReference type="HOGENOM" id="CLU_061999_0_1_6"/>
<dbReference type="OrthoDB" id="9808747at2"/>
<dbReference type="Proteomes" id="UP000000537">
    <property type="component" value="Chromosome II"/>
</dbReference>
<dbReference type="GO" id="GO:0005829">
    <property type="term" value="C:cytosol"/>
    <property type="evidence" value="ECO:0007669"/>
    <property type="project" value="TreeGrafter"/>
</dbReference>
<dbReference type="GO" id="GO:0016791">
    <property type="term" value="F:phosphatase activity"/>
    <property type="evidence" value="ECO:0007669"/>
    <property type="project" value="UniProtKB-UniRule"/>
</dbReference>
<dbReference type="GO" id="GO:0008270">
    <property type="term" value="F:zinc ion binding"/>
    <property type="evidence" value="ECO:0007669"/>
    <property type="project" value="UniProtKB-UniRule"/>
</dbReference>
<dbReference type="GO" id="GO:0071978">
    <property type="term" value="P:bacterial-type flagellum-dependent swarming motility"/>
    <property type="evidence" value="ECO:0007669"/>
    <property type="project" value="TreeGrafter"/>
</dbReference>
<dbReference type="CDD" id="cd07437">
    <property type="entry name" value="PHP_HisPPase_Ycdx_like"/>
    <property type="match status" value="1"/>
</dbReference>
<dbReference type="Gene3D" id="3.20.20.140">
    <property type="entry name" value="Metal-dependent hydrolases"/>
    <property type="match status" value="1"/>
</dbReference>
<dbReference type="HAMAP" id="MF_01561">
    <property type="entry name" value="YcdX_phosphat"/>
    <property type="match status" value="1"/>
</dbReference>
<dbReference type="InterPro" id="IPR023710">
    <property type="entry name" value="Phosphatase_YcdX_put"/>
</dbReference>
<dbReference type="InterPro" id="IPR004013">
    <property type="entry name" value="PHP_dom"/>
</dbReference>
<dbReference type="InterPro" id="IPR050243">
    <property type="entry name" value="PHP_phosphatase"/>
</dbReference>
<dbReference type="InterPro" id="IPR003141">
    <property type="entry name" value="Pol/His_phosphatase_N"/>
</dbReference>
<dbReference type="InterPro" id="IPR016195">
    <property type="entry name" value="Pol/histidinol_Pase-like"/>
</dbReference>
<dbReference type="NCBIfam" id="NF006702">
    <property type="entry name" value="PRK09248.1"/>
    <property type="match status" value="1"/>
</dbReference>
<dbReference type="PANTHER" id="PTHR36928">
    <property type="entry name" value="PHOSPHATASE YCDX-RELATED"/>
    <property type="match status" value="1"/>
</dbReference>
<dbReference type="PANTHER" id="PTHR36928:SF1">
    <property type="entry name" value="PHOSPHATASE YCDX-RELATED"/>
    <property type="match status" value="1"/>
</dbReference>
<dbReference type="Pfam" id="PF02811">
    <property type="entry name" value="PHP"/>
    <property type="match status" value="1"/>
</dbReference>
<dbReference type="SMART" id="SM00481">
    <property type="entry name" value="POLIIIAc"/>
    <property type="match status" value="1"/>
</dbReference>
<dbReference type="SUPFAM" id="SSF89550">
    <property type="entry name" value="PHP domain-like"/>
    <property type="match status" value="1"/>
</dbReference>
<protein>
    <recommendedName>
        <fullName evidence="1">Probable phosphatase VF_A0065</fullName>
        <ecNumber evidence="1">3.1.3.-</ecNumber>
    </recommendedName>
</protein>
<feature type="chain" id="PRO_0000228708" description="Probable phosphatase VF_A0065">
    <location>
        <begin position="1"/>
        <end position="248"/>
    </location>
</feature>
<feature type="binding site" evidence="1">
    <location>
        <position position="8"/>
    </location>
    <ligand>
        <name>Zn(2+)</name>
        <dbReference type="ChEBI" id="CHEBI:29105"/>
        <label>1</label>
    </ligand>
</feature>
<feature type="binding site" evidence="1">
    <location>
        <position position="10"/>
    </location>
    <ligand>
        <name>Zn(2+)</name>
        <dbReference type="ChEBI" id="CHEBI:29105"/>
        <label>1</label>
    </ligand>
</feature>
<feature type="binding site" evidence="1">
    <location>
        <position position="16"/>
    </location>
    <ligand>
        <name>Zn(2+)</name>
        <dbReference type="ChEBI" id="CHEBI:29105"/>
        <label>2</label>
    </ligand>
</feature>
<feature type="binding site" evidence="1">
    <location>
        <position position="41"/>
    </location>
    <ligand>
        <name>Zn(2+)</name>
        <dbReference type="ChEBI" id="CHEBI:29105"/>
        <label>2</label>
    </ligand>
</feature>
<feature type="binding site" evidence="1">
    <location>
        <position position="74"/>
    </location>
    <ligand>
        <name>Zn(2+)</name>
        <dbReference type="ChEBI" id="CHEBI:29105"/>
        <label>1</label>
    </ligand>
</feature>
<feature type="binding site" evidence="1">
    <location>
        <position position="74"/>
    </location>
    <ligand>
        <name>Zn(2+)</name>
        <dbReference type="ChEBI" id="CHEBI:29105"/>
        <label>3</label>
    </ligand>
</feature>
<feature type="binding site" evidence="1">
    <location>
        <position position="102"/>
    </location>
    <ligand>
        <name>Zn(2+)</name>
        <dbReference type="ChEBI" id="CHEBI:29105"/>
        <label>3</label>
    </ligand>
</feature>
<feature type="binding site" evidence="1">
    <location>
        <position position="132"/>
    </location>
    <ligand>
        <name>Zn(2+)</name>
        <dbReference type="ChEBI" id="CHEBI:29105"/>
        <label>3</label>
    </ligand>
</feature>
<feature type="binding site" evidence="1">
    <location>
        <position position="194"/>
    </location>
    <ligand>
        <name>Zn(2+)</name>
        <dbReference type="ChEBI" id="CHEBI:29105"/>
        <label>1</label>
    </ligand>
</feature>
<feature type="binding site" evidence="1">
    <location>
        <position position="196"/>
    </location>
    <ligand>
        <name>Zn(2+)</name>
        <dbReference type="ChEBI" id="CHEBI:29105"/>
        <label>2</label>
    </ligand>
</feature>
<proteinExistence type="inferred from homology"/>
<name>Y3065_ALIF1</name>
<reference key="1">
    <citation type="journal article" date="2005" name="Proc. Natl. Acad. Sci. U.S.A.">
        <title>Complete genome sequence of Vibrio fischeri: a symbiotic bacterium with pathogenic congeners.</title>
        <authorList>
            <person name="Ruby E.G."/>
            <person name="Urbanowski M."/>
            <person name="Campbell J."/>
            <person name="Dunn A."/>
            <person name="Faini M."/>
            <person name="Gunsalus R."/>
            <person name="Lostroh P."/>
            <person name="Lupp C."/>
            <person name="McCann J."/>
            <person name="Millikan D."/>
            <person name="Schaefer A."/>
            <person name="Stabb E."/>
            <person name="Stevens A."/>
            <person name="Visick K."/>
            <person name="Whistler C."/>
            <person name="Greenberg E.P."/>
        </authorList>
    </citation>
    <scope>NUCLEOTIDE SEQUENCE [LARGE SCALE GENOMIC DNA]</scope>
    <source>
        <strain>ATCC 700601 / ES114</strain>
    </source>
</reference>
<gene>
    <name type="ordered locus">VF_A0065</name>
</gene>
<accession>Q5E1G0</accession>